<reference key="1">
    <citation type="journal article" date="2005" name="Proc. Natl. Acad. Sci. U.S.A.">
        <title>Identification of the Wnt signaling activator leucine-rich repeat in Flightless interaction protein 2 by a genome-wide functional analysis.</title>
        <authorList>
            <person name="Liu J."/>
            <person name="Bang A.G."/>
            <person name="Kintner C."/>
            <person name="Orth A.P."/>
            <person name="Chanda S.K."/>
            <person name="Ding S."/>
            <person name="Schultz P.G."/>
        </authorList>
    </citation>
    <scope>NUCLEOTIDE SEQUENCE [MRNA] (ISOFORM 1)</scope>
    <scope>FUNCTION</scope>
    <scope>DEVELOPMENTAL STAGE</scope>
    <source>
        <tissue>Embryo</tissue>
    </source>
</reference>
<reference key="2">
    <citation type="submission" date="2004-06" db="EMBL/GenBank/DDBJ databases">
        <authorList>
            <consortium name="NIH - Xenopus Gene Collection (XGC) project"/>
        </authorList>
    </citation>
    <scope>NUCLEOTIDE SEQUENCE [LARGE SCALE MRNA] (ISOFORM 2)</scope>
    <source>
        <tissue>Tail bud</tissue>
    </source>
</reference>
<organism>
    <name type="scientific">Xenopus laevis</name>
    <name type="common">African clawed frog</name>
    <dbReference type="NCBI Taxonomy" id="8355"/>
    <lineage>
        <taxon>Eukaryota</taxon>
        <taxon>Metazoa</taxon>
        <taxon>Chordata</taxon>
        <taxon>Craniata</taxon>
        <taxon>Vertebrata</taxon>
        <taxon>Euteleostomi</taxon>
        <taxon>Amphibia</taxon>
        <taxon>Batrachia</taxon>
        <taxon>Anura</taxon>
        <taxon>Pipoidea</taxon>
        <taxon>Pipidae</taxon>
        <taxon>Xenopodinae</taxon>
        <taxon>Xenopus</taxon>
        <taxon>Xenopus</taxon>
    </lineage>
</organism>
<name>LRRF2_XENLA</name>
<dbReference type="EMBL" id="BC073391">
    <property type="protein sequence ID" value="AAH73391.1"/>
    <property type="molecule type" value="mRNA"/>
</dbReference>
<dbReference type="RefSeq" id="NP_001085821.1">
    <property type="nucleotide sequence ID" value="NM_001092352.1"/>
</dbReference>
<dbReference type="SMR" id="Q6GNW0"/>
<dbReference type="DNASU" id="444248"/>
<dbReference type="GeneID" id="444248"/>
<dbReference type="KEGG" id="xla:444248"/>
<dbReference type="AGR" id="Xenbase:XB-GENE-950915"/>
<dbReference type="CTD" id="444248"/>
<dbReference type="Xenbase" id="XB-GENE-950915">
    <property type="gene designation" value="lrrfip2.L"/>
</dbReference>
<dbReference type="OrthoDB" id="10028421at2759"/>
<dbReference type="Proteomes" id="UP000186698">
    <property type="component" value="Chromosome 6L"/>
</dbReference>
<dbReference type="Bgee" id="444248">
    <property type="expression patterns" value="Expressed in zone of skin and 19 other cell types or tissues"/>
</dbReference>
<dbReference type="GO" id="GO:0030275">
    <property type="term" value="F:LRR domain binding"/>
    <property type="evidence" value="ECO:0000250"/>
    <property type="project" value="UniProtKB"/>
</dbReference>
<dbReference type="GO" id="GO:0009950">
    <property type="term" value="P:dorsal/ventral axis specification"/>
    <property type="evidence" value="ECO:0000315"/>
    <property type="project" value="UniProtKB"/>
</dbReference>
<dbReference type="GO" id="GO:0006355">
    <property type="term" value="P:regulation of DNA-templated transcription"/>
    <property type="evidence" value="ECO:0007669"/>
    <property type="project" value="InterPro"/>
</dbReference>
<dbReference type="GO" id="GO:0016055">
    <property type="term" value="P:Wnt signaling pathway"/>
    <property type="evidence" value="ECO:0000315"/>
    <property type="project" value="UniProtKB"/>
</dbReference>
<dbReference type="Gene3D" id="1.20.5.4090">
    <property type="match status" value="1"/>
</dbReference>
<dbReference type="InterPro" id="IPR019139">
    <property type="entry name" value="LRRFIP1/2"/>
</dbReference>
<dbReference type="PANTHER" id="PTHR19212">
    <property type="entry name" value="LEUCINE RICH REPEAT IN FLII INTERACTING PROTEIN"/>
    <property type="match status" value="1"/>
</dbReference>
<dbReference type="PANTHER" id="PTHR19212:SF6">
    <property type="entry name" value="LEUCINE-RICH REPEAT FLIGHTLESS-INTERACTING PROTEIN 2"/>
    <property type="match status" value="1"/>
</dbReference>
<dbReference type="Pfam" id="PF09738">
    <property type="entry name" value="LRRFIP"/>
    <property type="match status" value="3"/>
</dbReference>
<proteinExistence type="evidence at transcript level"/>
<keyword id="KW-0025">Alternative splicing</keyword>
<keyword id="KW-0175">Coiled coil</keyword>
<keyword id="KW-0217">Developmental protein</keyword>
<keyword id="KW-1185">Reference proteome</keyword>
<keyword id="KW-0879">Wnt signaling pathway</keyword>
<comment type="function">
    <text evidence="3">May function as activator of the canonical Wnt signaling pathway upstream of ctnnb1/beta-catenin. Might be required for dorsal axis formation.</text>
</comment>
<comment type="alternative products">
    <event type="alternative splicing"/>
    <isoform>
        <id>Q6GNW0-1</id>
        <name>1</name>
        <sequence type="displayed"/>
    </isoform>
    <isoform>
        <id>Q6GNW0-2</id>
        <name>2</name>
        <sequence type="described" ref="VSP_035798 VSP_035799 VSP_035800"/>
    </isoform>
</comment>
<comment type="developmental stage">
    <text evidence="3">A shorter isoform, which probably corresponds to isoform 2, is expressed both maternally and zygotically throughout early development. Isoform 1 is expressed only after the mid-blastula transition (MBT), becoming readily detectable after stage 14.</text>
</comment>
<comment type="similarity">
    <text evidence="5">Belongs to the LRRFIP family.</text>
</comment>
<sequence>MGTPGSGRKRTQIKDRFSAEDEALSHIAREAEARLAAKRAARAEARDIRMRELERQQKELTHRYHDKKWGQIQKWMEDSDHARHLQRSSHRHSMASSRVTPNHRSSSVDVSGSHRGRESISRRRDSVYNTLKDSSRRTSNSYSNSYDVKNTTSSSHRDLLSGLYHDQRKYSSLKYNKPISTHHIRSSSLYSEPLATKRTYGTSLYKDGLYNASSSRAPSEYSCYSSRASSARSSPVCSDDEGSVSYSSCRGRRDSVSSDFSDQSESAADYFSRSNRRGSIVSDVDDVSIPDLNSLDEKTDKQFTTENYSRPSSRNATSGIPGTFTPLSGSSSRRGSGDASCSLDPDASLSELRDIYDLKDQIQDVEGRYMQGLKELRESLAEVEEKYKKAMVSNAQLDNEKSNLVYHVDTLKDVIEEMEEQMAEYHRENEEKSKELERQKHNCSILQHKLDEHKEGIRQRDEFIEENQRMQQRVDSLVREVYDLQETINWKDKKIGALERQKEYFDCIKNERDELRDELTAVKEKVKIGEKHGLVIIPDGTPNGDINHEPMVGAITVVSQEAAHVLESAGEGPLDVRLRKLAEEKEELVAQIRKLKLQKDDERQKSAKNNSTTTDPTGLENGSDLQLIEMQRDANRQISEYKFRLSKSEQDITTLEQNVMRLEGQVVRYKSAAENAEKVEDELKAEKRRLQRELRTALDKMEEMEMTNNHLVKRLEKMKANRTALLSQQ</sequence>
<feature type="chain" id="PRO_0000245249" description="Leucine-rich repeat flightless-interacting protein 2">
    <location>
        <begin position="1"/>
        <end position="729"/>
    </location>
</feature>
<feature type="region of interest" description="Disordered" evidence="2">
    <location>
        <begin position="80"/>
        <end position="156"/>
    </location>
</feature>
<feature type="region of interest" description="Disordered" evidence="2">
    <location>
        <begin position="230"/>
        <end position="268"/>
    </location>
</feature>
<feature type="region of interest" description="Disordered" evidence="2">
    <location>
        <begin position="289"/>
        <end position="344"/>
    </location>
</feature>
<feature type="region of interest" description="Disordered" evidence="2">
    <location>
        <begin position="600"/>
        <end position="621"/>
    </location>
</feature>
<feature type="coiled-coil region" evidence="1">
    <location>
        <begin position="27"/>
        <end position="69"/>
    </location>
</feature>
<feature type="coiled-coil region" evidence="1">
    <location>
        <begin position="357"/>
        <end position="531"/>
    </location>
</feature>
<feature type="coiled-coil region" evidence="1">
    <location>
        <begin position="574"/>
        <end position="722"/>
    </location>
</feature>
<feature type="compositionally biased region" description="Basic residues" evidence="2">
    <location>
        <begin position="84"/>
        <end position="93"/>
    </location>
</feature>
<feature type="compositionally biased region" description="Polar residues" evidence="2">
    <location>
        <begin position="99"/>
        <end position="110"/>
    </location>
</feature>
<feature type="compositionally biased region" description="Basic and acidic residues" evidence="2">
    <location>
        <begin position="115"/>
        <end position="126"/>
    </location>
</feature>
<feature type="compositionally biased region" description="Low complexity" evidence="2">
    <location>
        <begin position="137"/>
        <end position="147"/>
    </location>
</feature>
<feature type="compositionally biased region" description="Low complexity" evidence="2">
    <location>
        <begin position="257"/>
        <end position="268"/>
    </location>
</feature>
<feature type="compositionally biased region" description="Polar residues" evidence="2">
    <location>
        <begin position="304"/>
        <end position="320"/>
    </location>
</feature>
<feature type="compositionally biased region" description="Polar residues" evidence="2">
    <location>
        <begin position="607"/>
        <end position="616"/>
    </location>
</feature>
<feature type="splice variant" id="VSP_035798" description="In isoform 2." evidence="4">
    <location>
        <begin position="60"/>
        <end position="294"/>
    </location>
</feature>
<feature type="splice variant" id="VSP_035799" description="In isoform 2." evidence="4">
    <location>
        <begin position="351"/>
        <end position="374"/>
    </location>
</feature>
<feature type="splice variant" id="VSP_035800" description="In isoform 2." evidence="4">
    <location>
        <begin position="465"/>
        <end position="529"/>
    </location>
</feature>
<feature type="sequence conflict" description="In Ref. 2; AAH73391." evidence="5" ref="2">
    <original>K</original>
    <variation>L</variation>
    <location>
        <position position="599"/>
    </location>
</feature>
<evidence type="ECO:0000255" key="1"/>
<evidence type="ECO:0000256" key="2">
    <source>
        <dbReference type="SAM" id="MobiDB-lite"/>
    </source>
</evidence>
<evidence type="ECO:0000269" key="3">
    <source>
    </source>
</evidence>
<evidence type="ECO:0000303" key="4">
    <source ref="2"/>
</evidence>
<evidence type="ECO:0000305" key="5"/>
<gene>
    <name type="primary">lrrfip2</name>
</gene>
<protein>
    <recommendedName>
        <fullName>Leucine-rich repeat flightless-interacting protein 2</fullName>
        <shortName>LRR FLII-interacting protein 2</shortName>
        <shortName>xLRRFIP2</shortName>
    </recommendedName>
</protein>
<accession>Q6GNW0</accession>